<evidence type="ECO:0000255" key="1">
    <source>
        <dbReference type="HAMAP-Rule" id="MF_00607"/>
    </source>
</evidence>
<evidence type="ECO:0000256" key="2">
    <source>
        <dbReference type="SAM" id="MobiDB-lite"/>
    </source>
</evidence>
<reference key="1">
    <citation type="journal article" date="2007" name="Proc. Natl. Acad. Sci. U.S.A.">
        <title>Genome plasticity of BCG and impact on vaccine efficacy.</title>
        <authorList>
            <person name="Brosch R."/>
            <person name="Gordon S.V."/>
            <person name="Garnier T."/>
            <person name="Eiglmeier K."/>
            <person name="Frigui W."/>
            <person name="Valenti P."/>
            <person name="Dos Santos S."/>
            <person name="Duthoy S."/>
            <person name="Lacroix C."/>
            <person name="Garcia-Pelayo C."/>
            <person name="Inwald J.K."/>
            <person name="Golby P."/>
            <person name="Garcia J.N."/>
            <person name="Hewinson R.G."/>
            <person name="Behr M.A."/>
            <person name="Quail M.A."/>
            <person name="Churcher C."/>
            <person name="Barrell B.G."/>
            <person name="Parkhill J."/>
            <person name="Cole S.T."/>
        </authorList>
    </citation>
    <scope>NUCLEOTIDE SEQUENCE [LARGE SCALE GENOMIC DNA]</scope>
    <source>
        <strain>BCG / Pasteur 1173P2</strain>
    </source>
</reference>
<name>RSMA_MYCBP</name>
<proteinExistence type="inferred from homology"/>
<comment type="function">
    <text evidence="1">Specifically dimethylates two adjacent adenosines (A1518 and A1519) in the loop of a conserved hairpin near the 3'-end of 16S rRNA in the 30S particle. May play a critical role in biogenesis of 30S subunits.</text>
</comment>
<comment type="catalytic activity">
    <reaction evidence="1">
        <text>adenosine(1518)/adenosine(1519) in 16S rRNA + 4 S-adenosyl-L-methionine = N(6)-dimethyladenosine(1518)/N(6)-dimethyladenosine(1519) in 16S rRNA + 4 S-adenosyl-L-homocysteine + 4 H(+)</text>
        <dbReference type="Rhea" id="RHEA:19609"/>
        <dbReference type="Rhea" id="RHEA-COMP:10232"/>
        <dbReference type="Rhea" id="RHEA-COMP:10233"/>
        <dbReference type="ChEBI" id="CHEBI:15378"/>
        <dbReference type="ChEBI" id="CHEBI:57856"/>
        <dbReference type="ChEBI" id="CHEBI:59789"/>
        <dbReference type="ChEBI" id="CHEBI:74411"/>
        <dbReference type="ChEBI" id="CHEBI:74493"/>
        <dbReference type="EC" id="2.1.1.182"/>
    </reaction>
</comment>
<comment type="subcellular location">
    <subcellularLocation>
        <location evidence="1">Cytoplasm</location>
    </subcellularLocation>
</comment>
<comment type="similarity">
    <text evidence="1">Belongs to the class I-like SAM-binding methyltransferase superfamily. rRNA adenine N(6)-methyltransferase family. RsmA subfamily.</text>
</comment>
<protein>
    <recommendedName>
        <fullName evidence="1">Ribosomal RNA small subunit methyltransferase A</fullName>
        <ecNumber evidence="1">2.1.1.182</ecNumber>
    </recommendedName>
    <alternativeName>
        <fullName evidence="1">16S rRNA (adenine(1518)-N(6)/adenine(1519)-N(6))-dimethyltransferase</fullName>
    </alternativeName>
    <alternativeName>
        <fullName evidence="1">16S rRNA dimethyladenosine transferase</fullName>
    </alternativeName>
    <alternativeName>
        <fullName evidence="1">16S rRNA dimethylase</fullName>
    </alternativeName>
    <alternativeName>
        <fullName evidence="1">S-adenosylmethionine-6-N', N'-adenosyl(rRNA) dimethyltransferase</fullName>
    </alternativeName>
</protein>
<organism>
    <name type="scientific">Mycobacterium bovis (strain BCG / Pasteur 1173P2)</name>
    <dbReference type="NCBI Taxonomy" id="410289"/>
    <lineage>
        <taxon>Bacteria</taxon>
        <taxon>Bacillati</taxon>
        <taxon>Actinomycetota</taxon>
        <taxon>Actinomycetes</taxon>
        <taxon>Mycobacteriales</taxon>
        <taxon>Mycobacteriaceae</taxon>
        <taxon>Mycobacterium</taxon>
        <taxon>Mycobacterium tuberculosis complex</taxon>
    </lineage>
</organism>
<feature type="chain" id="PRO_1000056640" description="Ribosomal RNA small subunit methyltransferase A">
    <location>
        <begin position="1"/>
        <end position="317"/>
    </location>
</feature>
<feature type="region of interest" description="Disordered" evidence="2">
    <location>
        <begin position="293"/>
        <end position="317"/>
    </location>
</feature>
<feature type="binding site" evidence="1">
    <location>
        <position position="37"/>
    </location>
    <ligand>
        <name>S-adenosyl-L-methionine</name>
        <dbReference type="ChEBI" id="CHEBI:59789"/>
    </ligand>
</feature>
<feature type="binding site" evidence="1">
    <location>
        <position position="39"/>
    </location>
    <ligand>
        <name>S-adenosyl-L-methionine</name>
        <dbReference type="ChEBI" id="CHEBI:59789"/>
    </ligand>
</feature>
<feature type="binding site" evidence="1">
    <location>
        <position position="64"/>
    </location>
    <ligand>
        <name>S-adenosyl-L-methionine</name>
        <dbReference type="ChEBI" id="CHEBI:59789"/>
    </ligand>
</feature>
<feature type="binding site" evidence="1">
    <location>
        <position position="85"/>
    </location>
    <ligand>
        <name>S-adenosyl-L-methionine</name>
        <dbReference type="ChEBI" id="CHEBI:59789"/>
    </ligand>
</feature>
<feature type="binding site" evidence="1">
    <location>
        <position position="115"/>
    </location>
    <ligand>
        <name>S-adenosyl-L-methionine</name>
        <dbReference type="ChEBI" id="CHEBI:59789"/>
    </ligand>
</feature>
<feature type="binding site" evidence="1">
    <location>
        <position position="134"/>
    </location>
    <ligand>
        <name>S-adenosyl-L-methionine</name>
        <dbReference type="ChEBI" id="CHEBI:59789"/>
    </ligand>
</feature>
<dbReference type="EC" id="2.1.1.182" evidence="1"/>
<dbReference type="EMBL" id="AM408590">
    <property type="protein sequence ID" value="CAL71054.1"/>
    <property type="molecule type" value="Genomic_DNA"/>
</dbReference>
<dbReference type="RefSeq" id="WP_003405191.1">
    <property type="nucleotide sequence ID" value="NC_008769.1"/>
</dbReference>
<dbReference type="SMR" id="A1KHE8"/>
<dbReference type="GeneID" id="45424982"/>
<dbReference type="KEGG" id="mbb:BCG_1067"/>
<dbReference type="HOGENOM" id="CLU_041220_1_1_11"/>
<dbReference type="Proteomes" id="UP000001472">
    <property type="component" value="Chromosome"/>
</dbReference>
<dbReference type="GO" id="GO:0005829">
    <property type="term" value="C:cytosol"/>
    <property type="evidence" value="ECO:0007669"/>
    <property type="project" value="TreeGrafter"/>
</dbReference>
<dbReference type="GO" id="GO:0052908">
    <property type="term" value="F:16S rRNA (adenine(1518)-N(6)/adenine(1519)-N(6))-dimethyltransferase activity"/>
    <property type="evidence" value="ECO:0007669"/>
    <property type="project" value="UniProtKB-EC"/>
</dbReference>
<dbReference type="GO" id="GO:0003723">
    <property type="term" value="F:RNA binding"/>
    <property type="evidence" value="ECO:0007669"/>
    <property type="project" value="UniProtKB-KW"/>
</dbReference>
<dbReference type="CDD" id="cd02440">
    <property type="entry name" value="AdoMet_MTases"/>
    <property type="match status" value="1"/>
</dbReference>
<dbReference type="FunFam" id="1.10.8.100:FF:000003">
    <property type="entry name" value="Ribosomal RNA small subunit methyltransferase A"/>
    <property type="match status" value="1"/>
</dbReference>
<dbReference type="FunFam" id="3.40.50.150:FF:000023">
    <property type="entry name" value="Ribosomal RNA small subunit methyltransferase A"/>
    <property type="match status" value="1"/>
</dbReference>
<dbReference type="Gene3D" id="1.10.8.100">
    <property type="entry name" value="Ribosomal RNA adenine dimethylase-like, domain 2"/>
    <property type="match status" value="1"/>
</dbReference>
<dbReference type="Gene3D" id="3.40.50.150">
    <property type="entry name" value="Vaccinia Virus protein VP39"/>
    <property type="match status" value="1"/>
</dbReference>
<dbReference type="HAMAP" id="MF_00607">
    <property type="entry name" value="16SrRNA_methyltr_A"/>
    <property type="match status" value="1"/>
</dbReference>
<dbReference type="InterPro" id="IPR001737">
    <property type="entry name" value="KsgA/Erm"/>
</dbReference>
<dbReference type="InterPro" id="IPR023165">
    <property type="entry name" value="rRNA_Ade_diMease-like_C"/>
</dbReference>
<dbReference type="InterPro" id="IPR020596">
    <property type="entry name" value="rRNA_Ade_Mease_Trfase_CS"/>
</dbReference>
<dbReference type="InterPro" id="IPR020598">
    <property type="entry name" value="rRNA_Ade_methylase_Trfase_N"/>
</dbReference>
<dbReference type="InterPro" id="IPR011530">
    <property type="entry name" value="rRNA_adenine_dimethylase"/>
</dbReference>
<dbReference type="InterPro" id="IPR029063">
    <property type="entry name" value="SAM-dependent_MTases_sf"/>
</dbReference>
<dbReference type="NCBIfam" id="TIGR00755">
    <property type="entry name" value="ksgA"/>
    <property type="match status" value="1"/>
</dbReference>
<dbReference type="PANTHER" id="PTHR11727">
    <property type="entry name" value="DIMETHYLADENOSINE TRANSFERASE"/>
    <property type="match status" value="1"/>
</dbReference>
<dbReference type="PANTHER" id="PTHR11727:SF7">
    <property type="entry name" value="DIMETHYLADENOSINE TRANSFERASE-RELATED"/>
    <property type="match status" value="1"/>
</dbReference>
<dbReference type="Pfam" id="PF00398">
    <property type="entry name" value="RrnaAD"/>
    <property type="match status" value="1"/>
</dbReference>
<dbReference type="SMART" id="SM00650">
    <property type="entry name" value="rADc"/>
    <property type="match status" value="1"/>
</dbReference>
<dbReference type="SUPFAM" id="SSF53335">
    <property type="entry name" value="S-adenosyl-L-methionine-dependent methyltransferases"/>
    <property type="match status" value="1"/>
</dbReference>
<dbReference type="PROSITE" id="PS01131">
    <property type="entry name" value="RRNA_A_DIMETH"/>
    <property type="match status" value="1"/>
</dbReference>
<dbReference type="PROSITE" id="PS51689">
    <property type="entry name" value="SAM_RNA_A_N6_MT"/>
    <property type="match status" value="1"/>
</dbReference>
<sequence>MCCTSGCALTIRLLGRTEIRRLAKELDFRPRKSLGQNFVHDANTVRRVVAASGVSRSDLVLEVGPGLGSLTLALLDRGATVTAVEIDPLLASRLQQTVAEHSHSEVHRLTVVNRDVLALRREDLAAAPTAVVANLPYNVAVPALLHLLVEFPSIRVVTVMVQAEVAERLAAEPGSKEYGVPSVKLRFFGRVRRCGMVSPTVFWPIPRVYSGLVRIDRYETSPWPTDDAFRRRVFELVDIAFAQRRKTSRNAFVQWAGSGSESANRLLAASIDPARRGETLSIDDFVRLLRRSGGSDEATSTGRDARAPDISGHASAS</sequence>
<keyword id="KW-0963">Cytoplasm</keyword>
<keyword id="KW-0489">Methyltransferase</keyword>
<keyword id="KW-0694">RNA-binding</keyword>
<keyword id="KW-0698">rRNA processing</keyword>
<keyword id="KW-0949">S-adenosyl-L-methionine</keyword>
<keyword id="KW-0808">Transferase</keyword>
<gene>
    <name evidence="1" type="primary">rsmA</name>
    <name evidence="1" type="synonym">ksgA</name>
    <name type="ordered locus">BCG_1067</name>
</gene>
<accession>A1KHE8</accession>